<proteinExistence type="inferred from homology"/>
<reference key="1">
    <citation type="submission" date="2008-08" db="EMBL/GenBank/DDBJ databases">
        <title>Complete sequence of Vibrio fischeri strain MJ11.</title>
        <authorList>
            <person name="Mandel M.J."/>
            <person name="Stabb E.V."/>
            <person name="Ruby E.G."/>
            <person name="Ferriera S."/>
            <person name="Johnson J."/>
            <person name="Kravitz S."/>
            <person name="Beeson K."/>
            <person name="Sutton G."/>
            <person name="Rogers Y.-H."/>
            <person name="Friedman R."/>
            <person name="Frazier M."/>
            <person name="Venter J.C."/>
        </authorList>
    </citation>
    <scope>NUCLEOTIDE SEQUENCE [LARGE SCALE GENOMIC DNA]</scope>
    <source>
        <strain>MJ11</strain>
    </source>
</reference>
<dbReference type="EC" id="6.2.1.5" evidence="1"/>
<dbReference type="EMBL" id="CP001139">
    <property type="protein sequence ID" value="ACH65631.1"/>
    <property type="molecule type" value="Genomic_DNA"/>
</dbReference>
<dbReference type="RefSeq" id="WP_005418307.1">
    <property type="nucleotide sequence ID" value="NC_011184.1"/>
</dbReference>
<dbReference type="SMR" id="B5FC28"/>
<dbReference type="GeneID" id="54163493"/>
<dbReference type="KEGG" id="vfm:VFMJ11_0863"/>
<dbReference type="HOGENOM" id="CLU_037430_0_2_6"/>
<dbReference type="UniPathway" id="UPA00223">
    <property type="reaction ID" value="UER00999"/>
</dbReference>
<dbReference type="Proteomes" id="UP000001857">
    <property type="component" value="Chromosome I"/>
</dbReference>
<dbReference type="GO" id="GO:0005829">
    <property type="term" value="C:cytosol"/>
    <property type="evidence" value="ECO:0007669"/>
    <property type="project" value="TreeGrafter"/>
</dbReference>
<dbReference type="GO" id="GO:0042709">
    <property type="term" value="C:succinate-CoA ligase complex"/>
    <property type="evidence" value="ECO:0007669"/>
    <property type="project" value="TreeGrafter"/>
</dbReference>
<dbReference type="GO" id="GO:0005524">
    <property type="term" value="F:ATP binding"/>
    <property type="evidence" value="ECO:0007669"/>
    <property type="project" value="UniProtKB-UniRule"/>
</dbReference>
<dbReference type="GO" id="GO:0000287">
    <property type="term" value="F:magnesium ion binding"/>
    <property type="evidence" value="ECO:0007669"/>
    <property type="project" value="UniProtKB-UniRule"/>
</dbReference>
<dbReference type="GO" id="GO:0004775">
    <property type="term" value="F:succinate-CoA ligase (ADP-forming) activity"/>
    <property type="evidence" value="ECO:0007669"/>
    <property type="project" value="UniProtKB-UniRule"/>
</dbReference>
<dbReference type="GO" id="GO:0004776">
    <property type="term" value="F:succinate-CoA ligase (GDP-forming) activity"/>
    <property type="evidence" value="ECO:0007669"/>
    <property type="project" value="RHEA"/>
</dbReference>
<dbReference type="GO" id="GO:0006104">
    <property type="term" value="P:succinyl-CoA metabolic process"/>
    <property type="evidence" value="ECO:0007669"/>
    <property type="project" value="TreeGrafter"/>
</dbReference>
<dbReference type="GO" id="GO:0006099">
    <property type="term" value="P:tricarboxylic acid cycle"/>
    <property type="evidence" value="ECO:0007669"/>
    <property type="project" value="UniProtKB-UniRule"/>
</dbReference>
<dbReference type="FunFam" id="3.30.1490.20:FF:000002">
    <property type="entry name" value="Succinate--CoA ligase [ADP-forming] subunit beta"/>
    <property type="match status" value="1"/>
</dbReference>
<dbReference type="FunFam" id="3.30.470.20:FF:000002">
    <property type="entry name" value="Succinate--CoA ligase [ADP-forming] subunit beta"/>
    <property type="match status" value="1"/>
</dbReference>
<dbReference type="FunFam" id="3.40.50.261:FF:000001">
    <property type="entry name" value="Succinate--CoA ligase [ADP-forming] subunit beta"/>
    <property type="match status" value="1"/>
</dbReference>
<dbReference type="Gene3D" id="3.30.1490.20">
    <property type="entry name" value="ATP-grasp fold, A domain"/>
    <property type="match status" value="1"/>
</dbReference>
<dbReference type="Gene3D" id="3.30.470.20">
    <property type="entry name" value="ATP-grasp fold, B domain"/>
    <property type="match status" value="1"/>
</dbReference>
<dbReference type="Gene3D" id="3.40.50.261">
    <property type="entry name" value="Succinyl-CoA synthetase domains"/>
    <property type="match status" value="1"/>
</dbReference>
<dbReference type="HAMAP" id="MF_00558">
    <property type="entry name" value="Succ_CoA_beta"/>
    <property type="match status" value="1"/>
</dbReference>
<dbReference type="InterPro" id="IPR011761">
    <property type="entry name" value="ATP-grasp"/>
</dbReference>
<dbReference type="InterPro" id="IPR013650">
    <property type="entry name" value="ATP-grasp_succ-CoA_synth-type"/>
</dbReference>
<dbReference type="InterPro" id="IPR013815">
    <property type="entry name" value="ATP_grasp_subdomain_1"/>
</dbReference>
<dbReference type="InterPro" id="IPR017866">
    <property type="entry name" value="Succ-CoA_synthase_bsu_CS"/>
</dbReference>
<dbReference type="InterPro" id="IPR005811">
    <property type="entry name" value="SUCC_ACL_C"/>
</dbReference>
<dbReference type="InterPro" id="IPR005809">
    <property type="entry name" value="Succ_CoA_ligase-like_bsu"/>
</dbReference>
<dbReference type="InterPro" id="IPR016102">
    <property type="entry name" value="Succinyl-CoA_synth-like"/>
</dbReference>
<dbReference type="NCBIfam" id="NF001913">
    <property type="entry name" value="PRK00696.1"/>
    <property type="match status" value="1"/>
</dbReference>
<dbReference type="NCBIfam" id="TIGR01016">
    <property type="entry name" value="sucCoAbeta"/>
    <property type="match status" value="1"/>
</dbReference>
<dbReference type="PANTHER" id="PTHR11815:SF10">
    <property type="entry name" value="SUCCINATE--COA LIGASE [GDP-FORMING] SUBUNIT BETA, MITOCHONDRIAL"/>
    <property type="match status" value="1"/>
</dbReference>
<dbReference type="PANTHER" id="PTHR11815">
    <property type="entry name" value="SUCCINYL-COA SYNTHETASE BETA CHAIN"/>
    <property type="match status" value="1"/>
</dbReference>
<dbReference type="Pfam" id="PF08442">
    <property type="entry name" value="ATP-grasp_2"/>
    <property type="match status" value="1"/>
</dbReference>
<dbReference type="Pfam" id="PF00549">
    <property type="entry name" value="Ligase_CoA"/>
    <property type="match status" value="1"/>
</dbReference>
<dbReference type="PIRSF" id="PIRSF001554">
    <property type="entry name" value="SucCS_beta"/>
    <property type="match status" value="1"/>
</dbReference>
<dbReference type="SUPFAM" id="SSF56059">
    <property type="entry name" value="Glutathione synthetase ATP-binding domain-like"/>
    <property type="match status" value="1"/>
</dbReference>
<dbReference type="SUPFAM" id="SSF52210">
    <property type="entry name" value="Succinyl-CoA synthetase domains"/>
    <property type="match status" value="1"/>
</dbReference>
<dbReference type="PROSITE" id="PS50975">
    <property type="entry name" value="ATP_GRASP"/>
    <property type="match status" value="1"/>
</dbReference>
<dbReference type="PROSITE" id="PS01217">
    <property type="entry name" value="SUCCINYL_COA_LIG_3"/>
    <property type="match status" value="1"/>
</dbReference>
<gene>
    <name evidence="1" type="primary">sucC</name>
    <name type="ordered locus">VFMJ11_0863</name>
</gene>
<organism>
    <name type="scientific">Aliivibrio fischeri (strain MJ11)</name>
    <name type="common">Vibrio fischeri</name>
    <dbReference type="NCBI Taxonomy" id="388396"/>
    <lineage>
        <taxon>Bacteria</taxon>
        <taxon>Pseudomonadati</taxon>
        <taxon>Pseudomonadota</taxon>
        <taxon>Gammaproteobacteria</taxon>
        <taxon>Vibrionales</taxon>
        <taxon>Vibrionaceae</taxon>
        <taxon>Aliivibrio</taxon>
    </lineage>
</organism>
<protein>
    <recommendedName>
        <fullName evidence="1">Succinate--CoA ligase [ADP-forming] subunit beta</fullName>
        <ecNumber evidence="1">6.2.1.5</ecNumber>
    </recommendedName>
    <alternativeName>
        <fullName evidence="1">Succinyl-CoA synthetase subunit beta</fullName>
        <shortName evidence="1">SCS-beta</shortName>
    </alternativeName>
</protein>
<evidence type="ECO:0000255" key="1">
    <source>
        <dbReference type="HAMAP-Rule" id="MF_00558"/>
    </source>
</evidence>
<keyword id="KW-0067">ATP-binding</keyword>
<keyword id="KW-0436">Ligase</keyword>
<keyword id="KW-0460">Magnesium</keyword>
<keyword id="KW-0479">Metal-binding</keyword>
<keyword id="KW-0547">Nucleotide-binding</keyword>
<keyword id="KW-0816">Tricarboxylic acid cycle</keyword>
<comment type="function">
    <text evidence="1">Succinyl-CoA synthetase functions in the citric acid cycle (TCA), coupling the hydrolysis of succinyl-CoA to the synthesis of either ATP or GTP and thus represents the only step of substrate-level phosphorylation in the TCA. The beta subunit provides nucleotide specificity of the enzyme and binds the substrate succinate, while the binding sites for coenzyme A and phosphate are found in the alpha subunit.</text>
</comment>
<comment type="catalytic activity">
    <reaction evidence="1">
        <text>succinate + ATP + CoA = succinyl-CoA + ADP + phosphate</text>
        <dbReference type="Rhea" id="RHEA:17661"/>
        <dbReference type="ChEBI" id="CHEBI:30031"/>
        <dbReference type="ChEBI" id="CHEBI:30616"/>
        <dbReference type="ChEBI" id="CHEBI:43474"/>
        <dbReference type="ChEBI" id="CHEBI:57287"/>
        <dbReference type="ChEBI" id="CHEBI:57292"/>
        <dbReference type="ChEBI" id="CHEBI:456216"/>
        <dbReference type="EC" id="6.2.1.5"/>
    </reaction>
    <physiologicalReaction direction="right-to-left" evidence="1">
        <dbReference type="Rhea" id="RHEA:17663"/>
    </physiologicalReaction>
</comment>
<comment type="catalytic activity">
    <reaction evidence="1">
        <text>GTP + succinate + CoA = succinyl-CoA + GDP + phosphate</text>
        <dbReference type="Rhea" id="RHEA:22120"/>
        <dbReference type="ChEBI" id="CHEBI:30031"/>
        <dbReference type="ChEBI" id="CHEBI:37565"/>
        <dbReference type="ChEBI" id="CHEBI:43474"/>
        <dbReference type="ChEBI" id="CHEBI:57287"/>
        <dbReference type="ChEBI" id="CHEBI:57292"/>
        <dbReference type="ChEBI" id="CHEBI:58189"/>
    </reaction>
    <physiologicalReaction direction="right-to-left" evidence="1">
        <dbReference type="Rhea" id="RHEA:22122"/>
    </physiologicalReaction>
</comment>
<comment type="cofactor">
    <cofactor evidence="1">
        <name>Mg(2+)</name>
        <dbReference type="ChEBI" id="CHEBI:18420"/>
    </cofactor>
    <text evidence="1">Binds 1 Mg(2+) ion per subunit.</text>
</comment>
<comment type="pathway">
    <text evidence="1">Carbohydrate metabolism; tricarboxylic acid cycle; succinate from succinyl-CoA (ligase route): step 1/1.</text>
</comment>
<comment type="subunit">
    <text evidence="1">Heterotetramer of two alpha and two beta subunits.</text>
</comment>
<comment type="similarity">
    <text evidence="1">Belongs to the succinate/malate CoA ligase beta subunit family.</text>
</comment>
<sequence length="388" mass="41383">MNLHEYQAKQLFAEFGLPVPEGYACDTPQEAFEAAGRISTAKKVVKCQVHAGGRGKAGGVELHDTKEGVKEFAQKWLGKNLVTFQTDANGQPVSKILVEEASNIANELYLGAVVDRASQRIVFMASTEGGVDIEKIAEETPELIHKAAIDPLVGPQAYQGRELAFKLGLEGDQIKQFVKIFMGLGNMFAQYDLALLEINPLVVTAEGSLLCLDGKINIDSNAMYRQPKLREMHDPSQEDEREAHAAQWELNYVALDGSIGCMVNGAGLAMGTMDIVNLHGGQPANFLDVGGGATKERVTEAFKIILSDSNVKAVLVNIFGGIVRCDLIADGIIGAVEEVGVEVPVVVRLEGNNAPLGSQKLAESGLNIIAATSLTEAAEKVVAAAEGK</sequence>
<accession>B5FC28</accession>
<feature type="chain" id="PRO_1000129236" description="Succinate--CoA ligase [ADP-forming] subunit beta">
    <location>
        <begin position="1"/>
        <end position="388"/>
    </location>
</feature>
<feature type="domain" description="ATP-grasp" evidence="1">
    <location>
        <begin position="9"/>
        <end position="244"/>
    </location>
</feature>
<feature type="binding site" evidence="1">
    <location>
        <position position="46"/>
    </location>
    <ligand>
        <name>ATP</name>
        <dbReference type="ChEBI" id="CHEBI:30616"/>
    </ligand>
</feature>
<feature type="binding site" evidence="1">
    <location>
        <begin position="53"/>
        <end position="55"/>
    </location>
    <ligand>
        <name>ATP</name>
        <dbReference type="ChEBI" id="CHEBI:30616"/>
    </ligand>
</feature>
<feature type="binding site" evidence="1">
    <location>
        <position position="99"/>
    </location>
    <ligand>
        <name>ATP</name>
        <dbReference type="ChEBI" id="CHEBI:30616"/>
    </ligand>
</feature>
<feature type="binding site" evidence="1">
    <location>
        <position position="102"/>
    </location>
    <ligand>
        <name>ATP</name>
        <dbReference type="ChEBI" id="CHEBI:30616"/>
    </ligand>
</feature>
<feature type="binding site" evidence="1">
    <location>
        <position position="107"/>
    </location>
    <ligand>
        <name>ATP</name>
        <dbReference type="ChEBI" id="CHEBI:30616"/>
    </ligand>
</feature>
<feature type="binding site" evidence="1">
    <location>
        <position position="199"/>
    </location>
    <ligand>
        <name>Mg(2+)</name>
        <dbReference type="ChEBI" id="CHEBI:18420"/>
    </ligand>
</feature>
<feature type="binding site" evidence="1">
    <location>
        <position position="213"/>
    </location>
    <ligand>
        <name>Mg(2+)</name>
        <dbReference type="ChEBI" id="CHEBI:18420"/>
    </ligand>
</feature>
<feature type="binding site" evidence="1">
    <location>
        <position position="264"/>
    </location>
    <ligand>
        <name>substrate</name>
        <note>ligand shared with subunit alpha</note>
    </ligand>
</feature>
<feature type="binding site" evidence="1">
    <location>
        <begin position="321"/>
        <end position="323"/>
    </location>
    <ligand>
        <name>substrate</name>
        <note>ligand shared with subunit alpha</note>
    </ligand>
</feature>
<name>SUCC_ALIFM</name>